<dbReference type="EC" id="3.6.4.13"/>
<dbReference type="EMBL" id="CH476594">
    <property type="protein sequence ID" value="EAU39452.1"/>
    <property type="molecule type" value="Genomic_DNA"/>
</dbReference>
<dbReference type="RefSeq" id="XP_001210892.1">
    <property type="nucleotide sequence ID" value="XM_001210892.1"/>
</dbReference>
<dbReference type="SMR" id="Q0CZS8"/>
<dbReference type="STRING" id="341663.Q0CZS8"/>
<dbReference type="EnsemblFungi" id="EAU39452">
    <property type="protein sequence ID" value="EAU39452"/>
    <property type="gene ID" value="ATEG_00806"/>
</dbReference>
<dbReference type="GeneID" id="4355567"/>
<dbReference type="VEuPathDB" id="FungiDB:ATEG_00806"/>
<dbReference type="eggNOG" id="KOG0342">
    <property type="taxonomic scope" value="Eukaryota"/>
</dbReference>
<dbReference type="HOGENOM" id="CLU_003041_26_5_1"/>
<dbReference type="OMA" id="LMEFHSQ"/>
<dbReference type="OrthoDB" id="10259640at2759"/>
<dbReference type="Proteomes" id="UP000007963">
    <property type="component" value="Unassembled WGS sequence"/>
</dbReference>
<dbReference type="GO" id="GO:0005635">
    <property type="term" value="C:nuclear envelope"/>
    <property type="evidence" value="ECO:0007669"/>
    <property type="project" value="EnsemblFungi"/>
</dbReference>
<dbReference type="GO" id="GO:0005730">
    <property type="term" value="C:nucleolus"/>
    <property type="evidence" value="ECO:0007669"/>
    <property type="project" value="UniProtKB-SubCell"/>
</dbReference>
<dbReference type="GO" id="GO:0030687">
    <property type="term" value="C:preribosome, large subunit precursor"/>
    <property type="evidence" value="ECO:0007669"/>
    <property type="project" value="EnsemblFungi"/>
</dbReference>
<dbReference type="GO" id="GO:0032040">
    <property type="term" value="C:small-subunit processome"/>
    <property type="evidence" value="ECO:0007669"/>
    <property type="project" value="EnsemblFungi"/>
</dbReference>
<dbReference type="GO" id="GO:0005524">
    <property type="term" value="F:ATP binding"/>
    <property type="evidence" value="ECO:0007669"/>
    <property type="project" value="UniProtKB-KW"/>
</dbReference>
<dbReference type="GO" id="GO:0016887">
    <property type="term" value="F:ATP hydrolysis activity"/>
    <property type="evidence" value="ECO:0007669"/>
    <property type="project" value="RHEA"/>
</dbReference>
<dbReference type="GO" id="GO:0042802">
    <property type="term" value="F:identical protein binding"/>
    <property type="evidence" value="ECO:0007669"/>
    <property type="project" value="EnsemblFungi"/>
</dbReference>
<dbReference type="GO" id="GO:0003723">
    <property type="term" value="F:RNA binding"/>
    <property type="evidence" value="ECO:0007669"/>
    <property type="project" value="UniProtKB-KW"/>
</dbReference>
<dbReference type="GO" id="GO:0003724">
    <property type="term" value="F:RNA helicase activity"/>
    <property type="evidence" value="ECO:0007669"/>
    <property type="project" value="UniProtKB-EC"/>
</dbReference>
<dbReference type="GO" id="GO:0000463">
    <property type="term" value="P:maturation of LSU-rRNA from tricistronic rRNA transcript (SSU-rRNA, 5.8S rRNA, LSU-rRNA)"/>
    <property type="evidence" value="ECO:0007669"/>
    <property type="project" value="EnsemblFungi"/>
</dbReference>
<dbReference type="GO" id="GO:0000462">
    <property type="term" value="P:maturation of SSU-rRNA from tricistronic rRNA transcript (SSU-rRNA, 5.8S rRNA, LSU-rRNA)"/>
    <property type="evidence" value="ECO:0007669"/>
    <property type="project" value="EnsemblFungi"/>
</dbReference>
<dbReference type="GO" id="GO:1990417">
    <property type="term" value="P:snoRNA release from pre-rRNA"/>
    <property type="evidence" value="ECO:0007669"/>
    <property type="project" value="EnsemblFungi"/>
</dbReference>
<dbReference type="CDD" id="cd17942">
    <property type="entry name" value="DEADc_DDX18"/>
    <property type="match status" value="1"/>
</dbReference>
<dbReference type="CDD" id="cd18787">
    <property type="entry name" value="SF2_C_DEAD"/>
    <property type="match status" value="1"/>
</dbReference>
<dbReference type="FunFam" id="3.40.50.300:FF:000379">
    <property type="entry name" value="RNA helicase"/>
    <property type="match status" value="1"/>
</dbReference>
<dbReference type="FunFam" id="3.40.50.300:FF:000460">
    <property type="entry name" value="RNA helicase"/>
    <property type="match status" value="1"/>
</dbReference>
<dbReference type="Gene3D" id="3.40.50.300">
    <property type="entry name" value="P-loop containing nucleotide triphosphate hydrolases"/>
    <property type="match status" value="2"/>
</dbReference>
<dbReference type="InterPro" id="IPR044773">
    <property type="entry name" value="DDX18/Has1_DEADc"/>
</dbReference>
<dbReference type="InterPro" id="IPR011545">
    <property type="entry name" value="DEAD/DEAH_box_helicase_dom"/>
</dbReference>
<dbReference type="InterPro" id="IPR014001">
    <property type="entry name" value="Helicase_ATP-bd"/>
</dbReference>
<dbReference type="InterPro" id="IPR001650">
    <property type="entry name" value="Helicase_C-like"/>
</dbReference>
<dbReference type="InterPro" id="IPR027417">
    <property type="entry name" value="P-loop_NTPase"/>
</dbReference>
<dbReference type="InterPro" id="IPR000629">
    <property type="entry name" value="RNA-helicase_DEAD-box_CS"/>
</dbReference>
<dbReference type="InterPro" id="IPR014014">
    <property type="entry name" value="RNA_helicase_DEAD_Q_motif"/>
</dbReference>
<dbReference type="InterPro" id="IPR025313">
    <property type="entry name" value="SPB4-like_CTE"/>
</dbReference>
<dbReference type="PANTHER" id="PTHR24031">
    <property type="entry name" value="RNA HELICASE"/>
    <property type="match status" value="1"/>
</dbReference>
<dbReference type="Pfam" id="PF13959">
    <property type="entry name" value="CTE_SPB4"/>
    <property type="match status" value="1"/>
</dbReference>
<dbReference type="Pfam" id="PF00270">
    <property type="entry name" value="DEAD"/>
    <property type="match status" value="1"/>
</dbReference>
<dbReference type="Pfam" id="PF00271">
    <property type="entry name" value="Helicase_C"/>
    <property type="match status" value="1"/>
</dbReference>
<dbReference type="SMART" id="SM00487">
    <property type="entry name" value="DEXDc"/>
    <property type="match status" value="1"/>
</dbReference>
<dbReference type="SMART" id="SM01178">
    <property type="entry name" value="DUF4217"/>
    <property type="match status" value="1"/>
</dbReference>
<dbReference type="SMART" id="SM00490">
    <property type="entry name" value="HELICc"/>
    <property type="match status" value="1"/>
</dbReference>
<dbReference type="SUPFAM" id="SSF52540">
    <property type="entry name" value="P-loop containing nucleoside triphosphate hydrolases"/>
    <property type="match status" value="2"/>
</dbReference>
<dbReference type="PROSITE" id="PS00039">
    <property type="entry name" value="DEAD_ATP_HELICASE"/>
    <property type="match status" value="1"/>
</dbReference>
<dbReference type="PROSITE" id="PS51192">
    <property type="entry name" value="HELICASE_ATP_BIND_1"/>
    <property type="match status" value="1"/>
</dbReference>
<dbReference type="PROSITE" id="PS51194">
    <property type="entry name" value="HELICASE_CTER"/>
    <property type="match status" value="1"/>
</dbReference>
<dbReference type="PROSITE" id="PS51195">
    <property type="entry name" value="Q_MOTIF"/>
    <property type="match status" value="1"/>
</dbReference>
<gene>
    <name type="primary">has1</name>
    <name type="ORF">ATEG_00806</name>
</gene>
<organism>
    <name type="scientific">Aspergillus terreus (strain NIH 2624 / FGSC A1156)</name>
    <dbReference type="NCBI Taxonomy" id="341663"/>
    <lineage>
        <taxon>Eukaryota</taxon>
        <taxon>Fungi</taxon>
        <taxon>Dikarya</taxon>
        <taxon>Ascomycota</taxon>
        <taxon>Pezizomycotina</taxon>
        <taxon>Eurotiomycetes</taxon>
        <taxon>Eurotiomycetidae</taxon>
        <taxon>Eurotiales</taxon>
        <taxon>Aspergillaceae</taxon>
        <taxon>Aspergillus</taxon>
        <taxon>Aspergillus subgen. Circumdati</taxon>
    </lineage>
</organism>
<reference key="1">
    <citation type="submission" date="2005-09" db="EMBL/GenBank/DDBJ databases">
        <title>Annotation of the Aspergillus terreus NIH2624 genome.</title>
        <authorList>
            <person name="Birren B.W."/>
            <person name="Lander E.S."/>
            <person name="Galagan J.E."/>
            <person name="Nusbaum C."/>
            <person name="Devon K."/>
            <person name="Henn M."/>
            <person name="Ma L.-J."/>
            <person name="Jaffe D.B."/>
            <person name="Butler J."/>
            <person name="Alvarez P."/>
            <person name="Gnerre S."/>
            <person name="Grabherr M."/>
            <person name="Kleber M."/>
            <person name="Mauceli E.W."/>
            <person name="Brockman W."/>
            <person name="Rounsley S."/>
            <person name="Young S.K."/>
            <person name="LaButti K."/>
            <person name="Pushparaj V."/>
            <person name="DeCaprio D."/>
            <person name="Crawford M."/>
            <person name="Koehrsen M."/>
            <person name="Engels R."/>
            <person name="Montgomery P."/>
            <person name="Pearson M."/>
            <person name="Howarth C."/>
            <person name="Larson L."/>
            <person name="Luoma S."/>
            <person name="White J."/>
            <person name="Alvarado L."/>
            <person name="Kodira C.D."/>
            <person name="Zeng Q."/>
            <person name="Oleary S."/>
            <person name="Yandava C."/>
            <person name="Denning D.W."/>
            <person name="Nierman W.C."/>
            <person name="Milne T."/>
            <person name="Madden K."/>
        </authorList>
    </citation>
    <scope>NUCLEOTIDE SEQUENCE [LARGE SCALE GENOMIC DNA]</scope>
    <source>
        <strain>NIH 2624 / FGSC A1156</strain>
    </source>
</reference>
<sequence>MGSAQDQTKKRKRQKVSDGSKSSKSRVVEADDQRELTETTTKPKKQKTEDPPTDETPDAEDVEQTENGETAQDDAAKDAEAPLPSTMGLSLPTDAAPQKFDELNLSEPTMKAIRQMGFETMTEIQQRTIPPTLAGRDILGAAKTGSGKTLAFLIPAVEMLSALRFKPRNGTGVIIITPTRELALQIFGVAKELCEFHSQTYGIVIGGANRRAEAEKLNKGVNLLIATPGRLLDHLQNTQGFVYKNCKVLVLDEADRCLDVGFEAELRQIVKILPSEERQTLLFSATQTTKVEDLARISLKPGPLYINVDHRKEHATVDGVDQGYIICEADKRFLLLFTFLKKNLKKKIIIFFSSCNAVKYYADLLNYIDLPVLALHGKLKQQTRTQRFFEFCNATQGTLICTDVAARGLDIPAVDYIIQFDPPDEPKAYIHRVGRTARGTKGKIGRSIMLLQPSEVGFLNVLREARVPVVEFEFPQKKIIDIQSQLEKLIGQNYYLNQIQSAKDGYRAYLHAYASHSLRSVFNINKLDLVKVAKSFGFTTPPRVDITLGASMSKDKVQARRPYGSQNKSARFKRRA</sequence>
<name>HAS1_ASPTN</name>
<comment type="function">
    <text>ATP-dependent RNA helicase involved in 40S ribosomal subunit biogenesis. Required for the processing and cleavage of 35S pre-rRNA at sites A0, A1, and A2, leading to mature 18S rRNA.</text>
</comment>
<comment type="catalytic activity">
    <reaction>
        <text>ATP + H2O = ADP + phosphate + H(+)</text>
        <dbReference type="Rhea" id="RHEA:13065"/>
        <dbReference type="ChEBI" id="CHEBI:15377"/>
        <dbReference type="ChEBI" id="CHEBI:15378"/>
        <dbReference type="ChEBI" id="CHEBI:30616"/>
        <dbReference type="ChEBI" id="CHEBI:43474"/>
        <dbReference type="ChEBI" id="CHEBI:456216"/>
        <dbReference type="EC" id="3.6.4.13"/>
    </reaction>
</comment>
<comment type="subunit">
    <text evidence="1">Associates in the nucleolus with the 60S and pre-60S ribosomal subunits.</text>
</comment>
<comment type="subcellular location">
    <subcellularLocation>
        <location evidence="1">Nucleus</location>
        <location evidence="1">Nucleolus</location>
    </subcellularLocation>
</comment>
<comment type="domain">
    <text>The Q motif is unique to and characteristic of the DEAD box family of RNA helicases and controls ATP binding and hydrolysis.</text>
</comment>
<comment type="similarity">
    <text evidence="5">Belongs to the DEAD box helicase family. DDX18/HAS1 subfamily.</text>
</comment>
<proteinExistence type="inferred from homology"/>
<keyword id="KW-0067">ATP-binding</keyword>
<keyword id="KW-0347">Helicase</keyword>
<keyword id="KW-0378">Hydrolase</keyword>
<keyword id="KW-0547">Nucleotide-binding</keyword>
<keyword id="KW-0539">Nucleus</keyword>
<keyword id="KW-1185">Reference proteome</keyword>
<keyword id="KW-0690">Ribosome biogenesis</keyword>
<keyword id="KW-0694">RNA-binding</keyword>
<keyword id="KW-0698">rRNA processing</keyword>
<protein>
    <recommendedName>
        <fullName>ATP-dependent RNA helicase has1</fullName>
        <ecNumber>3.6.4.13</ecNumber>
    </recommendedName>
</protein>
<accession>Q0CZS8</accession>
<evidence type="ECO:0000250" key="1"/>
<evidence type="ECO:0000255" key="2">
    <source>
        <dbReference type="PROSITE-ProRule" id="PRU00541"/>
    </source>
</evidence>
<evidence type="ECO:0000255" key="3">
    <source>
        <dbReference type="PROSITE-ProRule" id="PRU00542"/>
    </source>
</evidence>
<evidence type="ECO:0000256" key="4">
    <source>
        <dbReference type="SAM" id="MobiDB-lite"/>
    </source>
</evidence>
<evidence type="ECO:0000305" key="5"/>
<feature type="chain" id="PRO_0000282470" description="ATP-dependent RNA helicase has1">
    <location>
        <begin position="1"/>
        <end position="576"/>
    </location>
</feature>
<feature type="domain" description="Helicase ATP-binding" evidence="2">
    <location>
        <begin position="129"/>
        <end position="305"/>
    </location>
</feature>
<feature type="domain" description="Helicase C-terminal" evidence="3">
    <location>
        <begin position="319"/>
        <end position="490"/>
    </location>
</feature>
<feature type="region of interest" description="Disordered" evidence="4">
    <location>
        <begin position="1"/>
        <end position="94"/>
    </location>
</feature>
<feature type="region of interest" description="Disordered" evidence="4">
    <location>
        <begin position="555"/>
        <end position="576"/>
    </location>
</feature>
<feature type="short sequence motif" description="Q motif">
    <location>
        <begin position="98"/>
        <end position="126"/>
    </location>
</feature>
<feature type="short sequence motif" description="DEAD box">
    <location>
        <begin position="252"/>
        <end position="255"/>
    </location>
</feature>
<feature type="compositionally biased region" description="Basic and acidic residues" evidence="4">
    <location>
        <begin position="26"/>
        <end position="37"/>
    </location>
</feature>
<feature type="compositionally biased region" description="Acidic residues" evidence="4">
    <location>
        <begin position="51"/>
        <end position="66"/>
    </location>
</feature>
<feature type="binding site" evidence="2">
    <location>
        <begin position="142"/>
        <end position="149"/>
    </location>
    <ligand>
        <name>ATP</name>
        <dbReference type="ChEBI" id="CHEBI:30616"/>
    </ligand>
</feature>